<dbReference type="EMBL" id="AE007317">
    <property type="protein sequence ID" value="AAK99286.1"/>
    <property type="status" value="ALT_INIT"/>
    <property type="molecule type" value="Genomic_DNA"/>
</dbReference>
<dbReference type="PIR" id="B97932">
    <property type="entry name" value="B97932"/>
</dbReference>
<dbReference type="RefSeq" id="NP_358076.1">
    <property type="nucleotide sequence ID" value="NC_003098.1"/>
</dbReference>
<dbReference type="RefSeq" id="WP_000247133.1">
    <property type="nucleotide sequence ID" value="NC_003098.1"/>
</dbReference>
<dbReference type="SMR" id="Q8DQV1"/>
<dbReference type="STRING" id="171101.spr0482"/>
<dbReference type="KEGG" id="spr:spr0482"/>
<dbReference type="PATRIC" id="fig|171101.6.peg.529"/>
<dbReference type="eggNOG" id="COG0858">
    <property type="taxonomic scope" value="Bacteria"/>
</dbReference>
<dbReference type="HOGENOM" id="CLU_089475_3_0_9"/>
<dbReference type="Proteomes" id="UP000000586">
    <property type="component" value="Chromosome"/>
</dbReference>
<dbReference type="GO" id="GO:0005829">
    <property type="term" value="C:cytosol"/>
    <property type="evidence" value="ECO:0000318"/>
    <property type="project" value="GO_Central"/>
</dbReference>
<dbReference type="GO" id="GO:0043024">
    <property type="term" value="F:ribosomal small subunit binding"/>
    <property type="evidence" value="ECO:0000318"/>
    <property type="project" value="GO_Central"/>
</dbReference>
<dbReference type="GO" id="GO:0030490">
    <property type="term" value="P:maturation of SSU-rRNA"/>
    <property type="evidence" value="ECO:0007669"/>
    <property type="project" value="UniProtKB-UniRule"/>
</dbReference>
<dbReference type="GO" id="GO:0042254">
    <property type="term" value="P:ribosome biogenesis"/>
    <property type="evidence" value="ECO:0000318"/>
    <property type="project" value="GO_Central"/>
</dbReference>
<dbReference type="FunFam" id="3.30.300.20:FF:000012">
    <property type="entry name" value="Ribosome-binding factor A"/>
    <property type="match status" value="1"/>
</dbReference>
<dbReference type="Gene3D" id="3.30.300.20">
    <property type="match status" value="1"/>
</dbReference>
<dbReference type="HAMAP" id="MF_00003">
    <property type="entry name" value="RbfA"/>
    <property type="match status" value="1"/>
</dbReference>
<dbReference type="InterPro" id="IPR015946">
    <property type="entry name" value="KH_dom-like_a/b"/>
</dbReference>
<dbReference type="InterPro" id="IPR000238">
    <property type="entry name" value="RbfA"/>
</dbReference>
<dbReference type="InterPro" id="IPR023799">
    <property type="entry name" value="RbfA_dom_sf"/>
</dbReference>
<dbReference type="InterPro" id="IPR020053">
    <property type="entry name" value="Ribosome-bd_factorA_CS"/>
</dbReference>
<dbReference type="NCBIfam" id="TIGR00082">
    <property type="entry name" value="rbfA"/>
    <property type="match status" value="1"/>
</dbReference>
<dbReference type="PANTHER" id="PTHR33515">
    <property type="entry name" value="RIBOSOME-BINDING FACTOR A, CHLOROPLASTIC-RELATED"/>
    <property type="match status" value="1"/>
</dbReference>
<dbReference type="PANTHER" id="PTHR33515:SF1">
    <property type="entry name" value="RIBOSOME-BINDING FACTOR A, CHLOROPLASTIC-RELATED"/>
    <property type="match status" value="1"/>
</dbReference>
<dbReference type="Pfam" id="PF02033">
    <property type="entry name" value="RBFA"/>
    <property type="match status" value="1"/>
</dbReference>
<dbReference type="SUPFAM" id="SSF89919">
    <property type="entry name" value="Ribosome-binding factor A, RbfA"/>
    <property type="match status" value="1"/>
</dbReference>
<dbReference type="PROSITE" id="PS01319">
    <property type="entry name" value="RBFA"/>
    <property type="match status" value="1"/>
</dbReference>
<accession>Q8DQV1</accession>
<evidence type="ECO:0000255" key="1">
    <source>
        <dbReference type="HAMAP-Rule" id="MF_00003"/>
    </source>
</evidence>
<evidence type="ECO:0000305" key="2"/>
<protein>
    <recommendedName>
        <fullName evidence="1">Ribosome-binding factor A</fullName>
    </recommendedName>
</protein>
<proteinExistence type="inferred from homology"/>
<sequence length="116" mass="13350">MVNHFRIDRVGMEIKREVNEILQKKVRDPRVQGVTITDVQMLGDLSVAKVYYTILSNLASDNQKAQIGLEKATGTIKRELGRNLKLYKIPDLTFVKDESIEYGNKIDEMLRNLDKN</sequence>
<comment type="function">
    <text evidence="1">One of several proteins that assist in the late maturation steps of the functional core of the 30S ribosomal subunit. Associates with free 30S ribosomal subunits (but not with 30S subunits that are part of 70S ribosomes or polysomes). Required for efficient processing of 16S rRNA. May interact with the 5'-terminal helix region of 16S rRNA.</text>
</comment>
<comment type="subunit">
    <text evidence="1">Monomer. Binds 30S ribosomal subunits, but not 50S ribosomal subunits or 70S ribosomes.</text>
</comment>
<comment type="subcellular location">
    <subcellularLocation>
        <location evidence="1">Cytoplasm</location>
    </subcellularLocation>
</comment>
<comment type="similarity">
    <text evidence="1">Belongs to the RbfA family.</text>
</comment>
<comment type="sequence caution" evidence="2">
    <conflict type="erroneous initiation">
        <sequence resource="EMBL-CDS" id="AAK99286"/>
    </conflict>
    <text>Extended N-terminus.</text>
</comment>
<reference key="1">
    <citation type="journal article" date="2001" name="J. Bacteriol.">
        <title>Genome of the bacterium Streptococcus pneumoniae strain R6.</title>
        <authorList>
            <person name="Hoskins J."/>
            <person name="Alborn W.E. Jr."/>
            <person name="Arnold J."/>
            <person name="Blaszczak L.C."/>
            <person name="Burgett S."/>
            <person name="DeHoff B.S."/>
            <person name="Estrem S.T."/>
            <person name="Fritz L."/>
            <person name="Fu D.-J."/>
            <person name="Fuller W."/>
            <person name="Geringer C."/>
            <person name="Gilmour R."/>
            <person name="Glass J.S."/>
            <person name="Khoja H."/>
            <person name="Kraft A.R."/>
            <person name="Lagace R.E."/>
            <person name="LeBlanc D.J."/>
            <person name="Lee L.N."/>
            <person name="Lefkowitz E.J."/>
            <person name="Lu J."/>
            <person name="Matsushima P."/>
            <person name="McAhren S.M."/>
            <person name="McHenney M."/>
            <person name="McLeaster K."/>
            <person name="Mundy C.W."/>
            <person name="Nicas T.I."/>
            <person name="Norris F.H."/>
            <person name="O'Gara M."/>
            <person name="Peery R.B."/>
            <person name="Robertson G.T."/>
            <person name="Rockey P."/>
            <person name="Sun P.-M."/>
            <person name="Winkler M.E."/>
            <person name="Yang Y."/>
            <person name="Young-Bellido M."/>
            <person name="Zhao G."/>
            <person name="Zook C.A."/>
            <person name="Baltz R.H."/>
            <person name="Jaskunas S.R."/>
            <person name="Rosteck P.R. Jr."/>
            <person name="Skatrud P.L."/>
            <person name="Glass J.I."/>
        </authorList>
    </citation>
    <scope>NUCLEOTIDE SEQUENCE [LARGE SCALE GENOMIC DNA]</scope>
    <source>
        <strain>ATCC BAA-255 / R6</strain>
    </source>
</reference>
<keyword id="KW-0963">Cytoplasm</keyword>
<keyword id="KW-1185">Reference proteome</keyword>
<keyword id="KW-0690">Ribosome biogenesis</keyword>
<feature type="chain" id="PRO_0000102746" description="Ribosome-binding factor A">
    <location>
        <begin position="1"/>
        <end position="116"/>
    </location>
</feature>
<gene>
    <name evidence="1" type="primary">rbfA</name>
    <name type="ordered locus">spr0482</name>
</gene>
<name>RBFA_STRR6</name>
<organism>
    <name type="scientific">Streptococcus pneumoniae (strain ATCC BAA-255 / R6)</name>
    <dbReference type="NCBI Taxonomy" id="171101"/>
    <lineage>
        <taxon>Bacteria</taxon>
        <taxon>Bacillati</taxon>
        <taxon>Bacillota</taxon>
        <taxon>Bacilli</taxon>
        <taxon>Lactobacillales</taxon>
        <taxon>Streptococcaceae</taxon>
        <taxon>Streptococcus</taxon>
    </lineage>
</organism>